<feature type="chain" id="PRO_0000132203" description="Small ribosomal subunit protein uS13m">
    <location>
        <begin position="1"/>
        <end position="129"/>
    </location>
</feature>
<feature type="region of interest" description="Disordered" evidence="2">
    <location>
        <begin position="92"/>
        <end position="129"/>
    </location>
</feature>
<feature type="compositionally biased region" description="Basic and acidic residues" evidence="2">
    <location>
        <begin position="116"/>
        <end position="129"/>
    </location>
</feature>
<dbReference type="EMBL" id="M18339">
    <property type="protein sequence ID" value="AAA70274.1"/>
    <property type="molecule type" value="Genomic_DNA"/>
</dbReference>
<dbReference type="PIR" id="S01428">
    <property type="entry name" value="R3MZ13"/>
</dbReference>
<dbReference type="SMR" id="P08977"/>
<dbReference type="PaxDb" id="4577-GRMZM5G887290_P01"/>
<dbReference type="MaizeGDB" id="69575"/>
<dbReference type="eggNOG" id="KOG3311">
    <property type="taxonomic scope" value="Eukaryota"/>
</dbReference>
<dbReference type="ExpressionAtlas" id="P08977">
    <property type="expression patterns" value="baseline"/>
</dbReference>
<dbReference type="GO" id="GO:0005739">
    <property type="term" value="C:mitochondrion"/>
    <property type="evidence" value="ECO:0007669"/>
    <property type="project" value="UniProtKB-SubCell"/>
</dbReference>
<dbReference type="GO" id="GO:1990904">
    <property type="term" value="C:ribonucleoprotein complex"/>
    <property type="evidence" value="ECO:0007669"/>
    <property type="project" value="UniProtKB-KW"/>
</dbReference>
<dbReference type="GO" id="GO:0005840">
    <property type="term" value="C:ribosome"/>
    <property type="evidence" value="ECO:0007669"/>
    <property type="project" value="UniProtKB-KW"/>
</dbReference>
<dbReference type="GO" id="GO:0019843">
    <property type="term" value="F:rRNA binding"/>
    <property type="evidence" value="ECO:0007669"/>
    <property type="project" value="UniProtKB-KW"/>
</dbReference>
<dbReference type="GO" id="GO:0003735">
    <property type="term" value="F:structural constituent of ribosome"/>
    <property type="evidence" value="ECO:0007669"/>
    <property type="project" value="InterPro"/>
</dbReference>
<dbReference type="GO" id="GO:0006412">
    <property type="term" value="P:translation"/>
    <property type="evidence" value="ECO:0007669"/>
    <property type="project" value="InterPro"/>
</dbReference>
<dbReference type="FunFam" id="1.10.8.50:FF:000011">
    <property type="entry name" value="Ribosomal protein S13"/>
    <property type="match status" value="1"/>
</dbReference>
<dbReference type="FunFam" id="4.10.910.10:FF:000003">
    <property type="entry name" value="Ribosomal protein S13"/>
    <property type="match status" value="1"/>
</dbReference>
<dbReference type="Gene3D" id="1.10.8.50">
    <property type="match status" value="1"/>
</dbReference>
<dbReference type="Gene3D" id="4.10.910.10">
    <property type="entry name" value="30s ribosomal protein s13, domain 2"/>
    <property type="match status" value="1"/>
</dbReference>
<dbReference type="HAMAP" id="MF_01315">
    <property type="entry name" value="Ribosomal_uS13"/>
    <property type="match status" value="1"/>
</dbReference>
<dbReference type="InterPro" id="IPR027437">
    <property type="entry name" value="Rbsml_uS13_C"/>
</dbReference>
<dbReference type="InterPro" id="IPR001892">
    <property type="entry name" value="Ribosomal_uS13"/>
</dbReference>
<dbReference type="InterPro" id="IPR010979">
    <property type="entry name" value="Ribosomal_uS13-like_H2TH"/>
</dbReference>
<dbReference type="InterPro" id="IPR018269">
    <property type="entry name" value="Ribosomal_uS13_CS"/>
</dbReference>
<dbReference type="PANTHER" id="PTHR10871">
    <property type="entry name" value="30S RIBOSOMAL PROTEIN S13/40S RIBOSOMAL PROTEIN S18"/>
    <property type="match status" value="1"/>
</dbReference>
<dbReference type="PANTHER" id="PTHR10871:SF8">
    <property type="entry name" value="SMALL RIBOSOMAL SUBUNIT PROTEIN US13M"/>
    <property type="match status" value="1"/>
</dbReference>
<dbReference type="Pfam" id="PF00416">
    <property type="entry name" value="Ribosomal_S13"/>
    <property type="match status" value="1"/>
</dbReference>
<dbReference type="PIRSF" id="PIRSF002134">
    <property type="entry name" value="Ribosomal_S13"/>
    <property type="match status" value="1"/>
</dbReference>
<dbReference type="SUPFAM" id="SSF46946">
    <property type="entry name" value="S13-like H2TH domain"/>
    <property type="match status" value="1"/>
</dbReference>
<dbReference type="PROSITE" id="PS00646">
    <property type="entry name" value="RIBOSOMAL_S13_1"/>
    <property type="match status" value="1"/>
</dbReference>
<dbReference type="PROSITE" id="PS50159">
    <property type="entry name" value="RIBOSOMAL_S13_2"/>
    <property type="match status" value="1"/>
</dbReference>
<keyword id="KW-0496">Mitochondrion</keyword>
<keyword id="KW-0687">Ribonucleoprotein</keyword>
<keyword id="KW-0689">Ribosomal protein</keyword>
<keyword id="KW-0694">RNA-binding</keyword>
<keyword id="KW-0699">rRNA-binding</keyword>
<protein>
    <recommendedName>
        <fullName evidence="3">Small ribosomal subunit protein uS13m</fullName>
    </recommendedName>
    <alternativeName>
        <fullName>Ribosomal protein S13, mitochondrial</fullName>
    </alternativeName>
</protein>
<proteinExistence type="inferred from homology"/>
<sequence>MSYISGARSLPDEQVRIASTKMDGIGPKKAIQLRYRLGISGNIKIHELTKYQIDQIEQMIAQDHVVHWELKRGERADIERLISISRYRGIRHQDGSPLRGQRTHTNARTARKQIRKGNERRLPKEQATD</sequence>
<evidence type="ECO:0000250" key="1"/>
<evidence type="ECO:0000256" key="2">
    <source>
        <dbReference type="SAM" id="MobiDB-lite"/>
    </source>
</evidence>
<evidence type="ECO:0000305" key="3"/>
<accession>P08977</accession>
<accession>Q36281</accession>
<organism>
    <name type="scientific">Zea mays</name>
    <name type="common">Maize</name>
    <dbReference type="NCBI Taxonomy" id="4577"/>
    <lineage>
        <taxon>Eukaryota</taxon>
        <taxon>Viridiplantae</taxon>
        <taxon>Streptophyta</taxon>
        <taxon>Embryophyta</taxon>
        <taxon>Tracheophyta</taxon>
        <taxon>Spermatophyta</taxon>
        <taxon>Magnoliopsida</taxon>
        <taxon>Liliopsida</taxon>
        <taxon>Poales</taxon>
        <taxon>Poaceae</taxon>
        <taxon>PACMAD clade</taxon>
        <taxon>Panicoideae</taxon>
        <taxon>Andropogonodae</taxon>
        <taxon>Andropogoneae</taxon>
        <taxon>Tripsacinae</taxon>
        <taxon>Zea</taxon>
    </lineage>
</organism>
<geneLocation type="mitochondrion"/>
<comment type="function">
    <text evidence="1">Located at the top of the head of the small subunit, it contacts several helices of the 18S rRNA.</text>
</comment>
<comment type="subunit">
    <text>Part of the small ribosomal subunit.</text>
</comment>
<comment type="subcellular location">
    <subcellularLocation>
        <location>Mitochondrion</location>
    </subcellularLocation>
</comment>
<comment type="similarity">
    <text evidence="3">Belongs to the universal ribosomal protein uS13 family.</text>
</comment>
<name>RT13_MAIZE</name>
<reference key="1">
    <citation type="journal article" date="1986" name="Mol. Gen. Genet.">
        <title>The tobacco mitochondrial ATPase subunit 9 gene is closely linked to an open reading frame for a ribosomal protein.</title>
        <authorList>
            <person name="Bland M.M."/>
            <person name="Levings C.S. III"/>
            <person name="Matzinger D.F."/>
        </authorList>
    </citation>
    <scope>NUCLEOTIDE SEQUENCE [GENOMIC DNA]</scope>
    <source>
        <strain>cv. B73</strain>
    </source>
</reference>
<gene>
    <name type="primary">RPS13</name>
</gene>